<evidence type="ECO:0000255" key="1">
    <source>
        <dbReference type="HAMAP-Rule" id="MF_01224"/>
    </source>
</evidence>
<protein>
    <recommendedName>
        <fullName evidence="1">Cyclic pyranopterin monophosphate synthase</fullName>
        <ecNumber evidence="1">4.6.1.17</ecNumber>
    </recommendedName>
    <alternativeName>
        <fullName evidence="1">Molybdenum cofactor biosynthesis protein C</fullName>
    </alternativeName>
</protein>
<reference key="1">
    <citation type="submission" date="2008-05" db="EMBL/GenBank/DDBJ databases">
        <title>Complete genome sequence of Clostridium botulinum E3 str. Alaska E43.</title>
        <authorList>
            <person name="Brinkac L.M."/>
            <person name="Brown J.L."/>
            <person name="Bruce D."/>
            <person name="Detter C."/>
            <person name="Munk C."/>
            <person name="Smith L.A."/>
            <person name="Smith T.J."/>
            <person name="Sutton G."/>
            <person name="Brettin T.S."/>
        </authorList>
    </citation>
    <scope>NUCLEOTIDE SEQUENCE [LARGE SCALE GENOMIC DNA]</scope>
    <source>
        <strain>Alaska E43 / Type E3</strain>
    </source>
</reference>
<name>MOAC_CLOBA</name>
<dbReference type="EC" id="4.6.1.17" evidence="1"/>
<dbReference type="EMBL" id="CP001078">
    <property type="protein sequence ID" value="ACD52355.1"/>
    <property type="molecule type" value="Genomic_DNA"/>
</dbReference>
<dbReference type="RefSeq" id="WP_003368972.1">
    <property type="nucleotide sequence ID" value="NC_010723.1"/>
</dbReference>
<dbReference type="SMR" id="B2V3T7"/>
<dbReference type="KEGG" id="cbt:CLH_1100"/>
<dbReference type="HOGENOM" id="CLU_074693_1_1_9"/>
<dbReference type="UniPathway" id="UPA00344"/>
<dbReference type="GO" id="GO:0061799">
    <property type="term" value="F:cyclic pyranopterin monophosphate synthase activity"/>
    <property type="evidence" value="ECO:0007669"/>
    <property type="project" value="UniProtKB-UniRule"/>
</dbReference>
<dbReference type="GO" id="GO:0006777">
    <property type="term" value="P:Mo-molybdopterin cofactor biosynthetic process"/>
    <property type="evidence" value="ECO:0007669"/>
    <property type="project" value="UniProtKB-UniRule"/>
</dbReference>
<dbReference type="CDD" id="cd01420">
    <property type="entry name" value="MoaC_PE"/>
    <property type="match status" value="1"/>
</dbReference>
<dbReference type="Gene3D" id="3.30.70.640">
    <property type="entry name" value="Molybdopterin cofactor biosynthesis C (MoaC) domain"/>
    <property type="match status" value="1"/>
</dbReference>
<dbReference type="HAMAP" id="MF_01224_B">
    <property type="entry name" value="MoaC_B"/>
    <property type="match status" value="1"/>
</dbReference>
<dbReference type="InterPro" id="IPR023045">
    <property type="entry name" value="MoaC"/>
</dbReference>
<dbReference type="InterPro" id="IPR047594">
    <property type="entry name" value="MoaC_bact/euk"/>
</dbReference>
<dbReference type="InterPro" id="IPR036522">
    <property type="entry name" value="MoaC_sf"/>
</dbReference>
<dbReference type="InterPro" id="IPR050105">
    <property type="entry name" value="MoCo_biosynth_MoaA/MoaC"/>
</dbReference>
<dbReference type="InterPro" id="IPR002820">
    <property type="entry name" value="Mopterin_CF_biosynth-C_dom"/>
</dbReference>
<dbReference type="NCBIfam" id="TIGR00581">
    <property type="entry name" value="moaC"/>
    <property type="match status" value="1"/>
</dbReference>
<dbReference type="NCBIfam" id="NF006870">
    <property type="entry name" value="PRK09364.1"/>
    <property type="match status" value="1"/>
</dbReference>
<dbReference type="PANTHER" id="PTHR22960:SF29">
    <property type="entry name" value="CYCLIC PYRANOPTERIN MONOPHOSPHATE SYNTHASE"/>
    <property type="match status" value="1"/>
</dbReference>
<dbReference type="PANTHER" id="PTHR22960">
    <property type="entry name" value="MOLYBDOPTERIN COFACTOR SYNTHESIS PROTEIN A"/>
    <property type="match status" value="1"/>
</dbReference>
<dbReference type="Pfam" id="PF01967">
    <property type="entry name" value="MoaC"/>
    <property type="match status" value="1"/>
</dbReference>
<dbReference type="SUPFAM" id="SSF55040">
    <property type="entry name" value="Molybdenum cofactor biosynthesis protein C, MoaC"/>
    <property type="match status" value="1"/>
</dbReference>
<comment type="function">
    <text evidence="1">Catalyzes the conversion of (8S)-3',8-cyclo-7,8-dihydroguanosine 5'-triphosphate to cyclic pyranopterin monophosphate (cPMP).</text>
</comment>
<comment type="catalytic activity">
    <reaction evidence="1">
        <text>(8S)-3',8-cyclo-7,8-dihydroguanosine 5'-triphosphate = cyclic pyranopterin phosphate + diphosphate</text>
        <dbReference type="Rhea" id="RHEA:49580"/>
        <dbReference type="ChEBI" id="CHEBI:33019"/>
        <dbReference type="ChEBI" id="CHEBI:59648"/>
        <dbReference type="ChEBI" id="CHEBI:131766"/>
        <dbReference type="EC" id="4.6.1.17"/>
    </reaction>
</comment>
<comment type="pathway">
    <text evidence="1">Cofactor biosynthesis; molybdopterin biosynthesis.</text>
</comment>
<comment type="subunit">
    <text evidence="1">Homohexamer; trimer of dimers.</text>
</comment>
<comment type="similarity">
    <text evidence="1">Belongs to the MoaC family.</text>
</comment>
<organism>
    <name type="scientific">Clostridium botulinum (strain Alaska E43 / Type E3)</name>
    <dbReference type="NCBI Taxonomy" id="508767"/>
    <lineage>
        <taxon>Bacteria</taxon>
        <taxon>Bacillati</taxon>
        <taxon>Bacillota</taxon>
        <taxon>Clostridia</taxon>
        <taxon>Eubacteriales</taxon>
        <taxon>Clostridiaceae</taxon>
        <taxon>Clostridium</taxon>
    </lineage>
</organism>
<gene>
    <name evidence="1" type="primary">moaC</name>
    <name type="ordered locus">CLH_1100</name>
</gene>
<accession>B2V3T7</accession>
<feature type="chain" id="PRO_1000139256" description="Cyclic pyranopterin monophosphate synthase">
    <location>
        <begin position="1"/>
        <end position="159"/>
    </location>
</feature>
<feature type="active site" evidence="1">
    <location>
        <position position="129"/>
    </location>
</feature>
<feature type="binding site" evidence="1">
    <location>
        <begin position="76"/>
        <end position="78"/>
    </location>
    <ligand>
        <name>substrate</name>
    </ligand>
</feature>
<feature type="binding site" evidence="1">
    <location>
        <begin position="114"/>
        <end position="115"/>
    </location>
    <ligand>
        <name>substrate</name>
    </ligand>
</feature>
<proteinExistence type="inferred from homology"/>
<sequence length="159" mass="17311">MENKFNHFDNEGNAIMVDVGNKNATERIAIASGKIRVNRDTFLAIEQGTAKKGDVLGVARVAGIMAAKKTSELIPLCHPLMITNCTIDFELLPKTLEVEVTSKVKVTGNTGVEMEALTAVSTTLLTIYDMCKAIDKAMEIDNIHLRRKTGGKSGDFINE</sequence>
<keyword id="KW-0456">Lyase</keyword>
<keyword id="KW-0501">Molybdenum cofactor biosynthesis</keyword>